<feature type="chain" id="PRO_0000082694" description="Ras-related protein Ral-A">
    <location>
        <begin position="1"/>
        <end position="203"/>
    </location>
</feature>
<feature type="propeptide" id="PRO_0000281345" description="Removed in mature form" evidence="1">
    <location>
        <begin position="204"/>
        <end position="206"/>
    </location>
</feature>
<feature type="short sequence motif" description="Effector region">
    <location>
        <begin position="43"/>
        <end position="51"/>
    </location>
</feature>
<feature type="binding site" evidence="1">
    <location>
        <begin position="21"/>
        <end position="28"/>
    </location>
    <ligand>
        <name>GTP</name>
        <dbReference type="ChEBI" id="CHEBI:37565"/>
    </ligand>
</feature>
<feature type="binding site" evidence="1">
    <location>
        <begin position="68"/>
        <end position="72"/>
    </location>
    <ligand>
        <name>GTP</name>
        <dbReference type="ChEBI" id="CHEBI:37565"/>
    </ligand>
</feature>
<feature type="binding site" evidence="1">
    <location>
        <begin position="127"/>
        <end position="130"/>
    </location>
    <ligand>
        <name>GTP</name>
        <dbReference type="ChEBI" id="CHEBI:37565"/>
    </ligand>
</feature>
<feature type="modified residue" description="Phosphoserine" evidence="2">
    <location>
        <position position="194"/>
    </location>
</feature>
<feature type="modified residue" description="Cysteine methyl ester" evidence="1">
    <location>
        <position position="203"/>
    </location>
</feature>
<feature type="lipid moiety-binding region" description="S-geranylgeranyl cysteine" evidence="1">
    <location>
        <position position="203"/>
    </location>
</feature>
<comment type="function">
    <text evidence="2 4">Multifunctional GTPase involved in a variety of cellular processes including gene expression, cell migration, cell proliferation, oncogenic transformation and membrane trafficking. Accomplishes its multiple functions by interacting with distinct downstream effectors. Acts as a GTP sensor for GTP-dependent exocytosis of dense core vesicles. Key regulator of LPAR1 signaling and competes with GRK2 for binding to LPAR1 thus affecting the signaling properties of the receptor. Required for anchorage-independent proliferation of transformed cells (By similarity). The RALA-exocyst complex regulates integrin-dependent membrane raft exocytosis and growth signaling (PubMed:20005108). During mitosis, supports the stabilization and elongation of the intracellular bridge between dividing cells. Cooperates with EXOC2 to recruit other components of the exocyst to the early midbody (By similarity). During mitosis, also controls mitochondrial fission by recruiting to the mitochondrion RALBP1, which mediates the phosphorylation and activation of DNM1L by the mitotic kinase cyclin B-CDK1 (By similarity).</text>
</comment>
<comment type="catalytic activity">
    <reaction evidence="2">
        <text>GTP + H2O = GDP + phosphate + H(+)</text>
        <dbReference type="Rhea" id="RHEA:19669"/>
        <dbReference type="ChEBI" id="CHEBI:15377"/>
        <dbReference type="ChEBI" id="CHEBI:15378"/>
        <dbReference type="ChEBI" id="CHEBI:37565"/>
        <dbReference type="ChEBI" id="CHEBI:43474"/>
        <dbReference type="ChEBI" id="CHEBI:58189"/>
        <dbReference type="EC" id="3.6.5.2"/>
    </reaction>
    <physiologicalReaction direction="left-to-right" evidence="2">
        <dbReference type="Rhea" id="RHEA:19670"/>
    </physiologicalReaction>
</comment>
<comment type="activity regulation">
    <text>Alternates between an inactive form bound to GDP and an active form bound to GTP. Activated by a guanine nucleotide-exchange factor (GEF) and inactivated by a GTPase-activating protein (GAP).</text>
</comment>
<comment type="subunit">
    <text evidence="2 3">Interacts (via effector domain) with RALBP1; during mitosis, recruits RALBP1 to the mitochondrion where it promotes DNM1L phosphorylation and mitochondrial fission (By similarity). Interacts with EXOC2/Sec5 and EXOC8/Exo84; binding to EXOC2 and EXOC8 is mutually exclusive. Interacts with Clostridium exoenzyme C3. Interacts with RALGPS1. Interacts with LPAR1 and LPAR2. Interacts with GRK2 in response to LPAR1 activation. RALA and GRK2 binding to LPAR1 is mutually exclusive (By similarity). Interacts with CDC42 (By similarity).</text>
</comment>
<comment type="subcellular location">
    <subcellularLocation>
        <location evidence="2">Cell membrane</location>
        <topology evidence="2">Lipid-anchor</topology>
        <orientation evidence="2">Cytoplasmic side</orientation>
    </subcellularLocation>
    <subcellularLocation>
        <location evidence="2">Cleavage furrow</location>
    </subcellularLocation>
    <subcellularLocation>
        <location evidence="2">Midbody</location>
        <location evidence="2">Midbody ring</location>
    </subcellularLocation>
    <subcellularLocation>
        <location evidence="2">Mitochondrion</location>
    </subcellularLocation>
    <text evidence="2">Predominantly at the cell surface in the absence of LPA. In the presence of LPA, colocalizes with LPAR1 and LPAR2 in endocytic vesicles. May colocalize with CNTRL/centriolin at the midbody ring. However, localization at the midbody at late cytokinesis was not confirmed. Relocalizes to the mitochondrion during mitosis where it regulates mitochondrial fission.</text>
</comment>
<comment type="PTM">
    <text evidence="2">Prenylation is essential for membrane localization.</text>
</comment>
<comment type="PTM">
    <text evidence="2">Phosphorylated. Phosphorylation at Ser-194 by AURKA/Aurora kinase A, during mitosis, induces RALA localization to the mitochondrion where it regulates mitochondrial fission.</text>
</comment>
<comment type="similarity">
    <text evidence="5">Belongs to the small GTPase superfamily. Ras family.</text>
</comment>
<keyword id="KW-0131">Cell cycle</keyword>
<keyword id="KW-0132">Cell division</keyword>
<keyword id="KW-1003">Cell membrane</keyword>
<keyword id="KW-0903">Direct protein sequencing</keyword>
<keyword id="KW-0268">Exocytosis</keyword>
<keyword id="KW-0342">GTP-binding</keyword>
<keyword id="KW-0378">Hydrolase</keyword>
<keyword id="KW-0449">Lipoprotein</keyword>
<keyword id="KW-0472">Membrane</keyword>
<keyword id="KW-0488">Methylation</keyword>
<keyword id="KW-0496">Mitochondrion</keyword>
<keyword id="KW-0547">Nucleotide-binding</keyword>
<keyword id="KW-0597">Phosphoprotein</keyword>
<keyword id="KW-0636">Prenylation</keyword>
<keyword id="KW-1185">Reference proteome</keyword>
<dbReference type="EC" id="3.6.5.2" evidence="2"/>
<dbReference type="EMBL" id="Z48587">
    <property type="protein sequence ID" value="CAA88488.1"/>
    <property type="molecule type" value="mRNA"/>
</dbReference>
<dbReference type="EMBL" id="AF244951">
    <property type="protein sequence ID" value="AAG23136.1"/>
    <property type="molecule type" value="mRNA"/>
</dbReference>
<dbReference type="EMBL" id="BC031741">
    <property type="protein sequence ID" value="AAH31741.1"/>
    <property type="molecule type" value="mRNA"/>
</dbReference>
<dbReference type="CCDS" id="CCDS26255.1"/>
<dbReference type="RefSeq" id="NP_062364.3">
    <property type="nucleotide sequence ID" value="NM_019491.5"/>
</dbReference>
<dbReference type="SMR" id="P63321"/>
<dbReference type="BioGRID" id="207790">
    <property type="interactions" value="10"/>
</dbReference>
<dbReference type="CORUM" id="P63321"/>
<dbReference type="FunCoup" id="P63321">
    <property type="interactions" value="3069"/>
</dbReference>
<dbReference type="IntAct" id="P63321">
    <property type="interactions" value="1"/>
</dbReference>
<dbReference type="STRING" id="10090.ENSMUSP00000009003"/>
<dbReference type="GlyGen" id="P63321">
    <property type="glycosylation" value="1 site, 1 O-linked glycan (1 site)"/>
</dbReference>
<dbReference type="iPTMnet" id="P63321"/>
<dbReference type="PhosphoSitePlus" id="P63321"/>
<dbReference type="SwissPalm" id="P63321"/>
<dbReference type="jPOST" id="P63321"/>
<dbReference type="PaxDb" id="10090-ENSMUSP00000009003"/>
<dbReference type="PeptideAtlas" id="P63321"/>
<dbReference type="ProteomicsDB" id="253169"/>
<dbReference type="Pumba" id="P63321"/>
<dbReference type="Antibodypedia" id="26723">
    <property type="antibodies" value="367 antibodies from 35 providers"/>
</dbReference>
<dbReference type="DNASU" id="56044"/>
<dbReference type="Ensembl" id="ENSMUST00000009003.9">
    <property type="protein sequence ID" value="ENSMUSP00000009003.8"/>
    <property type="gene ID" value="ENSMUSG00000008859.9"/>
</dbReference>
<dbReference type="GeneID" id="56044"/>
<dbReference type="KEGG" id="mmu:56044"/>
<dbReference type="UCSC" id="uc007pof.1">
    <property type="organism name" value="mouse"/>
</dbReference>
<dbReference type="AGR" id="MGI:1927243"/>
<dbReference type="CTD" id="5898"/>
<dbReference type="MGI" id="MGI:1927243">
    <property type="gene designation" value="Rala"/>
</dbReference>
<dbReference type="VEuPathDB" id="HostDB:ENSMUSG00000008859"/>
<dbReference type="eggNOG" id="KOG0395">
    <property type="taxonomic scope" value="Eukaryota"/>
</dbReference>
<dbReference type="GeneTree" id="ENSGT00940000155142"/>
<dbReference type="HOGENOM" id="CLU_041217_9_8_1"/>
<dbReference type="InParanoid" id="P63321"/>
<dbReference type="OMA" id="LASEWHC"/>
<dbReference type="OrthoDB" id="5976022at2759"/>
<dbReference type="PhylomeDB" id="P63321"/>
<dbReference type="TreeFam" id="TF312796"/>
<dbReference type="BioGRID-ORCS" id="56044">
    <property type="hits" value="2 hits in 79 CRISPR screens"/>
</dbReference>
<dbReference type="CD-CODE" id="CE726F99">
    <property type="entry name" value="Postsynaptic density"/>
</dbReference>
<dbReference type="ChiTaRS" id="Rala">
    <property type="organism name" value="mouse"/>
</dbReference>
<dbReference type="PRO" id="PR:P63321"/>
<dbReference type="Proteomes" id="UP000000589">
    <property type="component" value="Chromosome 13"/>
</dbReference>
<dbReference type="RNAct" id="P63321">
    <property type="molecule type" value="protein"/>
</dbReference>
<dbReference type="Bgee" id="ENSMUSG00000008859">
    <property type="expression patterns" value="Expressed in otic placode and 279 other cell types or tissues"/>
</dbReference>
<dbReference type="ExpressionAtlas" id="P63321">
    <property type="expression patterns" value="baseline and differential"/>
</dbReference>
<dbReference type="GO" id="GO:0009986">
    <property type="term" value="C:cell surface"/>
    <property type="evidence" value="ECO:0007669"/>
    <property type="project" value="Ensembl"/>
</dbReference>
<dbReference type="GO" id="GO:0032154">
    <property type="term" value="C:cleavage furrow"/>
    <property type="evidence" value="ECO:0000250"/>
    <property type="project" value="UniProtKB"/>
</dbReference>
<dbReference type="GO" id="GO:0030659">
    <property type="term" value="C:cytoplasmic vesicle membrane"/>
    <property type="evidence" value="ECO:0000304"/>
    <property type="project" value="Reactome"/>
</dbReference>
<dbReference type="GO" id="GO:0030139">
    <property type="term" value="C:endocytic vesicle"/>
    <property type="evidence" value="ECO:0007669"/>
    <property type="project" value="Ensembl"/>
</dbReference>
<dbReference type="GO" id="GO:0090543">
    <property type="term" value="C:Flemming body"/>
    <property type="evidence" value="ECO:0007669"/>
    <property type="project" value="UniProtKB-SubCell"/>
</dbReference>
<dbReference type="GO" id="GO:0005925">
    <property type="term" value="C:focal adhesion"/>
    <property type="evidence" value="ECO:0007669"/>
    <property type="project" value="Ensembl"/>
</dbReference>
<dbReference type="GO" id="GO:0005739">
    <property type="term" value="C:mitochondrion"/>
    <property type="evidence" value="ECO:0000250"/>
    <property type="project" value="UniProtKB"/>
</dbReference>
<dbReference type="GO" id="GO:0043209">
    <property type="term" value="C:myelin sheath"/>
    <property type="evidence" value="ECO:0007005"/>
    <property type="project" value="UniProtKB"/>
</dbReference>
<dbReference type="GO" id="GO:0005886">
    <property type="term" value="C:plasma membrane"/>
    <property type="evidence" value="ECO:0000250"/>
    <property type="project" value="UniProtKB"/>
</dbReference>
<dbReference type="GO" id="GO:0098685">
    <property type="term" value="C:Schaffer collateral - CA1 synapse"/>
    <property type="evidence" value="ECO:0007669"/>
    <property type="project" value="Ensembl"/>
</dbReference>
<dbReference type="GO" id="GO:0097060">
    <property type="term" value="C:synaptic membrane"/>
    <property type="evidence" value="ECO:0007669"/>
    <property type="project" value="Ensembl"/>
</dbReference>
<dbReference type="GO" id="GO:0051117">
    <property type="term" value="F:ATPase binding"/>
    <property type="evidence" value="ECO:0007669"/>
    <property type="project" value="Ensembl"/>
</dbReference>
<dbReference type="GO" id="GO:0031755">
    <property type="term" value="F:Edg-2 lysophosphatidic acid receptor binding"/>
    <property type="evidence" value="ECO:0000250"/>
    <property type="project" value="UniProtKB"/>
</dbReference>
<dbReference type="GO" id="GO:0003925">
    <property type="term" value="F:G protein activity"/>
    <property type="evidence" value="ECO:0007669"/>
    <property type="project" value="UniProtKB-EC"/>
</dbReference>
<dbReference type="GO" id="GO:0019003">
    <property type="term" value="F:GDP binding"/>
    <property type="evidence" value="ECO:0007669"/>
    <property type="project" value="Ensembl"/>
</dbReference>
<dbReference type="GO" id="GO:0005525">
    <property type="term" value="F:GTP binding"/>
    <property type="evidence" value="ECO:0007669"/>
    <property type="project" value="UniProtKB-KW"/>
</dbReference>
<dbReference type="GO" id="GO:0003924">
    <property type="term" value="F:GTPase activity"/>
    <property type="evidence" value="ECO:0000269"/>
    <property type="project" value="Reactome"/>
</dbReference>
<dbReference type="GO" id="GO:0017022">
    <property type="term" value="F:myosin binding"/>
    <property type="evidence" value="ECO:0007669"/>
    <property type="project" value="Ensembl"/>
</dbReference>
<dbReference type="GO" id="GO:0031625">
    <property type="term" value="F:ubiquitin protein ligase binding"/>
    <property type="evidence" value="ECO:0007669"/>
    <property type="project" value="Ensembl"/>
</dbReference>
<dbReference type="GO" id="GO:0051301">
    <property type="term" value="P:cell division"/>
    <property type="evidence" value="ECO:0007669"/>
    <property type="project" value="UniProtKB-KW"/>
</dbReference>
<dbReference type="GO" id="GO:0072655">
    <property type="term" value="P:establishment of protein localization to mitochondrion"/>
    <property type="evidence" value="ECO:0000250"/>
    <property type="project" value="UniProtKB"/>
</dbReference>
<dbReference type="GO" id="GO:0006887">
    <property type="term" value="P:exocytosis"/>
    <property type="evidence" value="ECO:0007669"/>
    <property type="project" value="UniProtKB-KW"/>
</dbReference>
<dbReference type="GO" id="GO:0051665">
    <property type="term" value="P:membrane raft localization"/>
    <property type="evidence" value="ECO:0000314"/>
    <property type="project" value="UniProtKB"/>
</dbReference>
<dbReference type="GO" id="GO:0001843">
    <property type="term" value="P:neural tube closure"/>
    <property type="evidence" value="ECO:0000315"/>
    <property type="project" value="CACAO"/>
</dbReference>
<dbReference type="GO" id="GO:0045742">
    <property type="term" value="P:positive regulation of epidermal growth factor receptor signaling pathway"/>
    <property type="evidence" value="ECO:0007669"/>
    <property type="project" value="Ensembl"/>
</dbReference>
<dbReference type="GO" id="GO:0051491">
    <property type="term" value="P:positive regulation of filopodium assembly"/>
    <property type="evidence" value="ECO:0007669"/>
    <property type="project" value="Ensembl"/>
</dbReference>
<dbReference type="GO" id="GO:0090141">
    <property type="term" value="P:positive regulation of mitochondrial fission"/>
    <property type="evidence" value="ECO:0000250"/>
    <property type="project" value="UniProtKB"/>
</dbReference>
<dbReference type="GO" id="GO:0007265">
    <property type="term" value="P:Ras protein signal transduction"/>
    <property type="evidence" value="ECO:0007669"/>
    <property type="project" value="Ensembl"/>
</dbReference>
<dbReference type="GO" id="GO:0031623">
    <property type="term" value="P:receptor internalization"/>
    <property type="evidence" value="ECO:0007669"/>
    <property type="project" value="Ensembl"/>
</dbReference>
<dbReference type="GO" id="GO:0032956">
    <property type="term" value="P:regulation of actin cytoskeleton organization"/>
    <property type="evidence" value="ECO:0007669"/>
    <property type="project" value="Ensembl"/>
</dbReference>
<dbReference type="GO" id="GO:0017157">
    <property type="term" value="P:regulation of exocytosis"/>
    <property type="evidence" value="ECO:0000314"/>
    <property type="project" value="UniProtKB"/>
</dbReference>
<dbReference type="GO" id="GO:0099149">
    <property type="term" value="P:regulation of postsynaptic neurotransmitter receptor internalization"/>
    <property type="evidence" value="ECO:0007669"/>
    <property type="project" value="Ensembl"/>
</dbReference>
<dbReference type="CDD" id="cd04139">
    <property type="entry name" value="RalA_RalB"/>
    <property type="match status" value="1"/>
</dbReference>
<dbReference type="FunFam" id="3.40.50.300:FF:000203">
    <property type="entry name" value="Putative ras-related protein ral-a"/>
    <property type="match status" value="1"/>
</dbReference>
<dbReference type="Gene3D" id="3.40.50.300">
    <property type="entry name" value="P-loop containing nucleotide triphosphate hydrolases"/>
    <property type="match status" value="1"/>
</dbReference>
<dbReference type="InterPro" id="IPR027417">
    <property type="entry name" value="P-loop_NTPase"/>
</dbReference>
<dbReference type="InterPro" id="IPR005225">
    <property type="entry name" value="Small_GTP-bd"/>
</dbReference>
<dbReference type="InterPro" id="IPR001806">
    <property type="entry name" value="Small_GTPase"/>
</dbReference>
<dbReference type="InterPro" id="IPR020849">
    <property type="entry name" value="Small_GTPase_Ras-type"/>
</dbReference>
<dbReference type="NCBIfam" id="TIGR00231">
    <property type="entry name" value="small_GTP"/>
    <property type="match status" value="1"/>
</dbReference>
<dbReference type="PANTHER" id="PTHR24070">
    <property type="entry name" value="RAS, DI-RAS, AND RHEB FAMILY MEMBERS OF SMALL GTPASE SUPERFAMILY"/>
    <property type="match status" value="1"/>
</dbReference>
<dbReference type="Pfam" id="PF00071">
    <property type="entry name" value="Ras"/>
    <property type="match status" value="1"/>
</dbReference>
<dbReference type="PRINTS" id="PR00449">
    <property type="entry name" value="RASTRNSFRMNG"/>
</dbReference>
<dbReference type="SMART" id="SM00175">
    <property type="entry name" value="RAB"/>
    <property type="match status" value="1"/>
</dbReference>
<dbReference type="SMART" id="SM00176">
    <property type="entry name" value="RAN"/>
    <property type="match status" value="1"/>
</dbReference>
<dbReference type="SMART" id="SM00173">
    <property type="entry name" value="RAS"/>
    <property type="match status" value="1"/>
</dbReference>
<dbReference type="SMART" id="SM00174">
    <property type="entry name" value="RHO"/>
    <property type="match status" value="1"/>
</dbReference>
<dbReference type="SUPFAM" id="SSF52540">
    <property type="entry name" value="P-loop containing nucleoside triphosphate hydrolases"/>
    <property type="match status" value="1"/>
</dbReference>
<dbReference type="PROSITE" id="PS51421">
    <property type="entry name" value="RAS"/>
    <property type="match status" value="1"/>
</dbReference>
<protein>
    <recommendedName>
        <fullName>Ras-related protein Ral-A</fullName>
        <ecNumber evidence="2">3.6.5.2</ecNumber>
    </recommendedName>
</protein>
<evidence type="ECO:0000250" key="1"/>
<evidence type="ECO:0000250" key="2">
    <source>
        <dbReference type="UniProtKB" id="P11233"/>
    </source>
</evidence>
<evidence type="ECO:0000250" key="3">
    <source>
        <dbReference type="UniProtKB" id="P63322"/>
    </source>
</evidence>
<evidence type="ECO:0000269" key="4">
    <source>
    </source>
</evidence>
<evidence type="ECO:0000305" key="5"/>
<reference key="1">
    <citation type="submission" date="1995-12" db="EMBL/GenBank/DDBJ databases">
        <authorList>
            <person name="Roger T.T."/>
        </authorList>
    </citation>
    <scope>NUCLEOTIDE SEQUENCE [MRNA]</scope>
    <source>
        <strain>BALB/cJ</strain>
        <tissue>Spleen</tissue>
    </source>
</reference>
<reference key="2">
    <citation type="journal article" date="2000" name="Mech. Dev.">
        <title>Tissue-specific expression of GTPas RalA and RalB during embryogenesis and regulation by epithelial-mesenchymal interaction.</title>
        <authorList>
            <person name="Zhao Z."/>
            <person name="Rivkees S.A."/>
        </authorList>
    </citation>
    <scope>NUCLEOTIDE SEQUENCE [MRNA]</scope>
</reference>
<reference key="3">
    <citation type="journal article" date="2004" name="Genome Res.">
        <title>The status, quality, and expansion of the NIH full-length cDNA project: the Mammalian Gene Collection (MGC).</title>
        <authorList>
            <consortium name="The MGC Project Team"/>
        </authorList>
    </citation>
    <scope>NUCLEOTIDE SEQUENCE [LARGE SCALE MRNA]</scope>
    <source>
        <tissue>Eye</tissue>
    </source>
</reference>
<reference key="4">
    <citation type="submission" date="2007-04" db="UniProtKB">
        <authorList>
            <person name="Lubec G."/>
            <person name="Kang S.U."/>
        </authorList>
    </citation>
    <scope>PROTEIN SEQUENCE OF 8-16; 28-47; 114-128 AND 167-173</scope>
    <scope>IDENTIFICATION BY MASS SPECTROMETRY</scope>
    <source>
        <strain>C57BL/6J</strain>
        <tissue>Brain</tissue>
    </source>
</reference>
<reference key="5">
    <citation type="journal article" date="1995" name="Oncogene">
        <title>A putative effector of Ral has homology to Rho/Rac GTPase activating proteins.</title>
        <authorList>
            <person name="Park S.-H."/>
            <person name="Weinberg R.A."/>
        </authorList>
    </citation>
    <scope>INTERACTION WITH RALBP1</scope>
</reference>
<reference key="6">
    <citation type="journal article" date="2010" name="Cell">
        <title>A tissue-specific atlas of mouse protein phosphorylation and expression.</title>
        <authorList>
            <person name="Huttlin E.L."/>
            <person name="Jedrychowski M.P."/>
            <person name="Elias J.E."/>
            <person name="Goswami T."/>
            <person name="Rad R."/>
            <person name="Beausoleil S.A."/>
            <person name="Villen J."/>
            <person name="Haas W."/>
            <person name="Sowa M.E."/>
            <person name="Gygi S.P."/>
        </authorList>
    </citation>
    <scope>IDENTIFICATION BY MASS SPECTROMETRY [LARGE SCALE ANALYSIS]</scope>
    <source>
        <tissue>Brain</tissue>
        <tissue>Brown adipose tissue</tissue>
        <tissue>Heart</tissue>
        <tissue>Kidney</tissue>
        <tissue>Liver</tissue>
        <tissue>Lung</tissue>
        <tissue>Pancreas</tissue>
        <tissue>Spleen</tissue>
        <tissue>Testis</tissue>
    </source>
</reference>
<reference key="7">
    <citation type="journal article" date="2010" name="Curr. Biol.">
        <title>RalA-exocyst complex regulates integrin-dependent membrane raft exocytosis and growth signaling.</title>
        <authorList>
            <person name="Balasubramanian N."/>
            <person name="Meier J.A."/>
            <person name="Scott D.W."/>
            <person name="Norambuena A."/>
            <person name="White M.A."/>
            <person name="Schwartz M.A."/>
        </authorList>
    </citation>
    <scope>FUNCTION</scope>
</reference>
<organism>
    <name type="scientific">Mus musculus</name>
    <name type="common">Mouse</name>
    <dbReference type="NCBI Taxonomy" id="10090"/>
    <lineage>
        <taxon>Eukaryota</taxon>
        <taxon>Metazoa</taxon>
        <taxon>Chordata</taxon>
        <taxon>Craniata</taxon>
        <taxon>Vertebrata</taxon>
        <taxon>Euteleostomi</taxon>
        <taxon>Mammalia</taxon>
        <taxon>Eutheria</taxon>
        <taxon>Euarchontoglires</taxon>
        <taxon>Glires</taxon>
        <taxon>Rodentia</taxon>
        <taxon>Myomorpha</taxon>
        <taxon>Muroidea</taxon>
        <taxon>Muridae</taxon>
        <taxon>Murinae</taxon>
        <taxon>Mus</taxon>
        <taxon>Mus</taxon>
    </lineage>
</organism>
<proteinExistence type="evidence at protein level"/>
<sequence length="206" mass="23553">MAANKPKGQNSLALHKVIMVGSGGVGKSALTLQFMYDEFVEDYEPTKADSYRKKVVLDGEEVQIDILDTAGQEDYAAIRDNYFRSGEGFLCVFSITEMESFAATADFREQILRVKEDENVPFLLVGNKSDLEDKRQVSVEEAKNRADQWNVNYVETSAKTRANVDKVFFDLMREIRARKMEDSKEKNGKKKRKSLAKRIRERCCIL</sequence>
<name>RALA_MOUSE</name>
<accession>P63321</accession>
<accession>P05810</accession>
<gene>
    <name type="primary">Rala</name>
    <name type="synonym">Ral</name>
    <name type="synonym">Ral-a</name>
</gene>